<protein>
    <recommendedName>
        <fullName evidence="1">Glutaminase</fullName>
        <ecNumber evidence="1">3.5.1.2</ecNumber>
    </recommendedName>
</protein>
<feature type="chain" id="PRO_1000048363" description="Glutaminase">
    <location>
        <begin position="1"/>
        <end position="304"/>
    </location>
</feature>
<feature type="binding site" evidence="1">
    <location>
        <position position="63"/>
    </location>
    <ligand>
        <name>substrate</name>
    </ligand>
</feature>
<feature type="binding site" evidence="1">
    <location>
        <position position="114"/>
    </location>
    <ligand>
        <name>substrate</name>
    </ligand>
</feature>
<feature type="binding site" evidence="1">
    <location>
        <position position="158"/>
    </location>
    <ligand>
        <name>substrate</name>
    </ligand>
</feature>
<feature type="binding site" evidence="1">
    <location>
        <position position="165"/>
    </location>
    <ligand>
        <name>substrate</name>
    </ligand>
</feature>
<feature type="binding site" evidence="1">
    <location>
        <position position="189"/>
    </location>
    <ligand>
        <name>substrate</name>
    </ligand>
</feature>
<feature type="binding site" evidence="1">
    <location>
        <position position="240"/>
    </location>
    <ligand>
        <name>substrate</name>
    </ligand>
</feature>
<feature type="binding site" evidence="1">
    <location>
        <position position="258"/>
    </location>
    <ligand>
        <name>substrate</name>
    </ligand>
</feature>
<proteinExistence type="inferred from homology"/>
<comment type="catalytic activity">
    <reaction evidence="1">
        <text>L-glutamine + H2O = L-glutamate + NH4(+)</text>
        <dbReference type="Rhea" id="RHEA:15889"/>
        <dbReference type="ChEBI" id="CHEBI:15377"/>
        <dbReference type="ChEBI" id="CHEBI:28938"/>
        <dbReference type="ChEBI" id="CHEBI:29985"/>
        <dbReference type="ChEBI" id="CHEBI:58359"/>
        <dbReference type="EC" id="3.5.1.2"/>
    </reaction>
</comment>
<comment type="subunit">
    <text evidence="1">Homotetramer.</text>
</comment>
<comment type="similarity">
    <text evidence="1">Belongs to the glutaminase family.</text>
</comment>
<gene>
    <name evidence="1" type="primary">glsA</name>
    <name type="ordered locus">Sputw3181_1314</name>
</gene>
<keyword id="KW-0378">Hydrolase</keyword>
<name>GLSA_SHESW</name>
<dbReference type="EC" id="3.5.1.2" evidence="1"/>
<dbReference type="EMBL" id="CP000503">
    <property type="protein sequence ID" value="ABM24157.1"/>
    <property type="molecule type" value="Genomic_DNA"/>
</dbReference>
<dbReference type="SMR" id="A1RHL2"/>
<dbReference type="KEGG" id="shw:Sputw3181_1314"/>
<dbReference type="HOGENOM" id="CLU_027932_1_1_6"/>
<dbReference type="Proteomes" id="UP000002597">
    <property type="component" value="Chromosome"/>
</dbReference>
<dbReference type="GO" id="GO:0004359">
    <property type="term" value="F:glutaminase activity"/>
    <property type="evidence" value="ECO:0007669"/>
    <property type="project" value="UniProtKB-UniRule"/>
</dbReference>
<dbReference type="GO" id="GO:0006537">
    <property type="term" value="P:glutamate biosynthetic process"/>
    <property type="evidence" value="ECO:0007669"/>
    <property type="project" value="TreeGrafter"/>
</dbReference>
<dbReference type="GO" id="GO:0006543">
    <property type="term" value="P:glutamine catabolic process"/>
    <property type="evidence" value="ECO:0007669"/>
    <property type="project" value="TreeGrafter"/>
</dbReference>
<dbReference type="FunFam" id="3.40.710.10:FF:000005">
    <property type="entry name" value="Glutaminase"/>
    <property type="match status" value="1"/>
</dbReference>
<dbReference type="Gene3D" id="3.40.710.10">
    <property type="entry name" value="DD-peptidase/beta-lactamase superfamily"/>
    <property type="match status" value="1"/>
</dbReference>
<dbReference type="HAMAP" id="MF_00313">
    <property type="entry name" value="Glutaminase"/>
    <property type="match status" value="1"/>
</dbReference>
<dbReference type="InterPro" id="IPR012338">
    <property type="entry name" value="Beta-lactam/transpept-like"/>
</dbReference>
<dbReference type="InterPro" id="IPR015868">
    <property type="entry name" value="Glutaminase"/>
</dbReference>
<dbReference type="NCBIfam" id="TIGR03814">
    <property type="entry name" value="Gln_ase"/>
    <property type="match status" value="1"/>
</dbReference>
<dbReference type="NCBIfam" id="NF002132">
    <property type="entry name" value="PRK00971.1-1"/>
    <property type="match status" value="1"/>
</dbReference>
<dbReference type="NCBIfam" id="NF002133">
    <property type="entry name" value="PRK00971.1-2"/>
    <property type="match status" value="1"/>
</dbReference>
<dbReference type="PANTHER" id="PTHR12544">
    <property type="entry name" value="GLUTAMINASE"/>
    <property type="match status" value="1"/>
</dbReference>
<dbReference type="PANTHER" id="PTHR12544:SF29">
    <property type="entry name" value="GLUTAMINASE"/>
    <property type="match status" value="1"/>
</dbReference>
<dbReference type="Pfam" id="PF04960">
    <property type="entry name" value="Glutaminase"/>
    <property type="match status" value="1"/>
</dbReference>
<dbReference type="SUPFAM" id="SSF56601">
    <property type="entry name" value="beta-lactamase/transpeptidase-like"/>
    <property type="match status" value="1"/>
</dbReference>
<accession>A1RHL2</accession>
<reference key="1">
    <citation type="submission" date="2006-12" db="EMBL/GenBank/DDBJ databases">
        <title>Complete sequence of Shewanella sp. W3-18-1.</title>
        <authorList>
            <consortium name="US DOE Joint Genome Institute"/>
            <person name="Copeland A."/>
            <person name="Lucas S."/>
            <person name="Lapidus A."/>
            <person name="Barry K."/>
            <person name="Detter J.C."/>
            <person name="Glavina del Rio T."/>
            <person name="Hammon N."/>
            <person name="Israni S."/>
            <person name="Dalin E."/>
            <person name="Tice H."/>
            <person name="Pitluck S."/>
            <person name="Chain P."/>
            <person name="Malfatti S."/>
            <person name="Shin M."/>
            <person name="Vergez L."/>
            <person name="Schmutz J."/>
            <person name="Larimer F."/>
            <person name="Land M."/>
            <person name="Hauser L."/>
            <person name="Kyrpides N."/>
            <person name="Lykidis A."/>
            <person name="Tiedje J."/>
            <person name="Richardson P."/>
        </authorList>
    </citation>
    <scope>NUCLEOTIDE SEQUENCE [LARGE SCALE GENOMIC DNA]</scope>
    <source>
        <strain>W3-18-1</strain>
    </source>
</reference>
<sequence>MPELALLEEVVEKVRPLLGQGKVANYIPALASVDAGKLGIAVTTVDGETLGAGDYLEPFSIQSISKVFSLTLALTLYEEAEIWSRVGKEPSGHSFNSLVQVELERGKPRNPFINAGALVIADLLQSRLGAPKHRMLELVRQLSQNDKVCFDKQVADSEYQHSARNAAIAYLMKSFGNFQGDVDTVLRTYFHYCALKMNCADLSRAMLYLANRGKTVDGTELISQVQTRQLNALLATSGLYDGAGEFAYRVGMPGKSGVGGGIIAVIPGELSICVWSPELDENGNSLAGTAMLEHLSQRLGRSIF</sequence>
<evidence type="ECO:0000255" key="1">
    <source>
        <dbReference type="HAMAP-Rule" id="MF_00313"/>
    </source>
</evidence>
<organism>
    <name type="scientific">Shewanella sp. (strain W3-18-1)</name>
    <dbReference type="NCBI Taxonomy" id="351745"/>
    <lineage>
        <taxon>Bacteria</taxon>
        <taxon>Pseudomonadati</taxon>
        <taxon>Pseudomonadota</taxon>
        <taxon>Gammaproteobacteria</taxon>
        <taxon>Alteromonadales</taxon>
        <taxon>Shewanellaceae</taxon>
        <taxon>Shewanella</taxon>
    </lineage>
</organism>